<feature type="signal peptide" evidence="1">
    <location>
        <begin position="1"/>
        <end position="17"/>
    </location>
</feature>
<feature type="chain" id="PRO_0000033052" description="Somatotropin">
    <location>
        <begin position="18"/>
        <end position="204"/>
    </location>
</feature>
<feature type="binding site" evidence="1">
    <location>
        <position position="36"/>
    </location>
    <ligand>
        <name>Zn(2+)</name>
        <dbReference type="ChEBI" id="CHEBI:29105"/>
    </ligand>
</feature>
<feature type="binding site" evidence="1">
    <location>
        <position position="186"/>
    </location>
    <ligand>
        <name>Zn(2+)</name>
        <dbReference type="ChEBI" id="CHEBI:29105"/>
    </ligand>
</feature>
<feature type="modified residue" description="Pyrrolidone carboxylic acid" evidence="1">
    <location>
        <position position="18"/>
    </location>
</feature>
<feature type="disulfide bond" evidence="1">
    <location>
        <begin position="69"/>
        <end position="177"/>
    </location>
</feature>
<feature type="disulfide bond" evidence="1">
    <location>
        <begin position="194"/>
        <end position="202"/>
    </location>
</feature>
<feature type="sequence conflict" description="In Ref. 2; AAF61751." evidence="2" ref="2">
    <original>D</original>
    <variation>N</variation>
    <location>
        <position position="2"/>
    </location>
</feature>
<feature type="sequence conflict" description="In Ref. 2; AAF61751." evidence="2" ref="2">
    <original>S</original>
    <variation>G</variation>
    <location>
        <position position="23"/>
    </location>
</feature>
<protein>
    <recommendedName>
        <fullName>Somatotropin</fullName>
    </recommendedName>
    <alternativeName>
        <fullName>Growth hormone</fullName>
    </alternativeName>
</protein>
<gene>
    <name type="primary">gh</name>
</gene>
<evidence type="ECO:0000250" key="1"/>
<evidence type="ECO:0000305" key="2"/>
<sequence length="204" mass="23090">MDRVLLLLSVLSLGVSSQPITDSQRLFSIAVSRVQHLHLLAQRLFSDFESSLQTEEQRQLNKIFLQDFCNSDYIISPIDKHETQRSSVLKLLSISYRLVESWEFPSRSLSGGSAPRNQISPKLSDLKTGILLLIRANQDGAEIFPDSSTLQLAPYGNYYQSLSGDESLRRTYELLACFKKDMHKVETYLTVAKCRLSPEANCTL</sequence>
<name>SOMA_SCIOC</name>
<dbReference type="EMBL" id="AF063834">
    <property type="protein sequence ID" value="AAC63266.1"/>
    <property type="molecule type" value="mRNA"/>
</dbReference>
<dbReference type="EMBL" id="AF065165">
    <property type="protein sequence ID" value="AAF61751.1"/>
    <property type="molecule type" value="mRNA"/>
</dbReference>
<dbReference type="SMR" id="Q9IB11"/>
<dbReference type="GO" id="GO:0005615">
    <property type="term" value="C:extracellular space"/>
    <property type="evidence" value="ECO:0007669"/>
    <property type="project" value="InterPro"/>
</dbReference>
<dbReference type="GO" id="GO:0070186">
    <property type="term" value="F:growth hormone activity"/>
    <property type="evidence" value="ECO:0007669"/>
    <property type="project" value="TreeGrafter"/>
</dbReference>
<dbReference type="GO" id="GO:0005131">
    <property type="term" value="F:growth hormone receptor binding"/>
    <property type="evidence" value="ECO:0007669"/>
    <property type="project" value="InterPro"/>
</dbReference>
<dbReference type="GO" id="GO:0046872">
    <property type="term" value="F:metal ion binding"/>
    <property type="evidence" value="ECO:0007669"/>
    <property type="project" value="UniProtKB-KW"/>
</dbReference>
<dbReference type="GO" id="GO:0048513">
    <property type="term" value="P:animal organ development"/>
    <property type="evidence" value="ECO:0007669"/>
    <property type="project" value="TreeGrafter"/>
</dbReference>
<dbReference type="GO" id="GO:0060396">
    <property type="term" value="P:growth hormone receptor signaling pathway"/>
    <property type="evidence" value="ECO:0007669"/>
    <property type="project" value="TreeGrafter"/>
</dbReference>
<dbReference type="GO" id="GO:0045927">
    <property type="term" value="P:positive regulation of growth"/>
    <property type="evidence" value="ECO:0007669"/>
    <property type="project" value="TreeGrafter"/>
</dbReference>
<dbReference type="GO" id="GO:0046427">
    <property type="term" value="P:positive regulation of receptor signaling pathway via JAK-STAT"/>
    <property type="evidence" value="ECO:0007669"/>
    <property type="project" value="TreeGrafter"/>
</dbReference>
<dbReference type="GO" id="GO:0031667">
    <property type="term" value="P:response to nutrient levels"/>
    <property type="evidence" value="ECO:0007669"/>
    <property type="project" value="TreeGrafter"/>
</dbReference>
<dbReference type="CDD" id="cd10285">
    <property type="entry name" value="somatotropin_like"/>
    <property type="match status" value="1"/>
</dbReference>
<dbReference type="FunFam" id="1.20.1250.10:FF:000009">
    <property type="entry name" value="Growth hormone"/>
    <property type="match status" value="1"/>
</dbReference>
<dbReference type="Gene3D" id="1.20.1250.10">
    <property type="match status" value="1"/>
</dbReference>
<dbReference type="InterPro" id="IPR009079">
    <property type="entry name" value="4_helix_cytokine-like_core"/>
</dbReference>
<dbReference type="InterPro" id="IPR034975">
    <property type="entry name" value="Somatotropin"/>
</dbReference>
<dbReference type="InterPro" id="IPR001400">
    <property type="entry name" value="Somatotropin/Prolactin"/>
</dbReference>
<dbReference type="InterPro" id="IPR018116">
    <property type="entry name" value="Somatotropin_CS"/>
</dbReference>
<dbReference type="PANTHER" id="PTHR11417:SF2">
    <property type="entry name" value="SOMATOTROPIN"/>
    <property type="match status" value="1"/>
</dbReference>
<dbReference type="PANTHER" id="PTHR11417">
    <property type="entry name" value="SOMATOTROPIN,PROLACTIN"/>
    <property type="match status" value="1"/>
</dbReference>
<dbReference type="Pfam" id="PF00103">
    <property type="entry name" value="Hormone_1"/>
    <property type="match status" value="1"/>
</dbReference>
<dbReference type="PRINTS" id="PR00836">
    <property type="entry name" value="SOMATOTROPIN"/>
</dbReference>
<dbReference type="SUPFAM" id="SSF47266">
    <property type="entry name" value="4-helical cytokines"/>
    <property type="match status" value="1"/>
</dbReference>
<dbReference type="PROSITE" id="PS00266">
    <property type="entry name" value="SOMATOTROPIN_1"/>
    <property type="match status" value="1"/>
</dbReference>
<dbReference type="PROSITE" id="PS00338">
    <property type="entry name" value="SOMATOTROPIN_2"/>
    <property type="match status" value="1"/>
</dbReference>
<organism>
    <name type="scientific">Sciaenops ocellatus</name>
    <name type="common">Red drum</name>
    <name type="synonym">Perca ocellata</name>
    <dbReference type="NCBI Taxonomy" id="76340"/>
    <lineage>
        <taxon>Eukaryota</taxon>
        <taxon>Metazoa</taxon>
        <taxon>Chordata</taxon>
        <taxon>Craniata</taxon>
        <taxon>Vertebrata</taxon>
        <taxon>Euteleostomi</taxon>
        <taxon>Actinopterygii</taxon>
        <taxon>Neopterygii</taxon>
        <taxon>Teleostei</taxon>
        <taxon>Neoteleostei</taxon>
        <taxon>Acanthomorphata</taxon>
        <taxon>Eupercaria</taxon>
        <taxon>Sciaenidae</taxon>
        <taxon>Sciaenops</taxon>
    </lineage>
</organism>
<keyword id="KW-1015">Disulfide bond</keyword>
<keyword id="KW-0372">Hormone</keyword>
<keyword id="KW-0479">Metal-binding</keyword>
<keyword id="KW-0873">Pyrrolidone carboxylic acid</keyword>
<keyword id="KW-0964">Secreted</keyword>
<keyword id="KW-0732">Signal</keyword>
<keyword id="KW-0862">Zinc</keyword>
<reference key="1">
    <citation type="submission" date="1998-05" db="EMBL/GenBank/DDBJ databases">
        <authorList>
            <person name="Trant J.M."/>
        </authorList>
    </citation>
    <scope>NUCLEOTIDE SEQUENCE [MRNA]</scope>
    <source>
        <tissue>Pituitary</tissue>
    </source>
</reference>
<reference key="2">
    <citation type="submission" date="1998-05" db="EMBL/GenBank/DDBJ databases">
        <authorList>
            <person name="Zhu Y."/>
        </authorList>
    </citation>
    <scope>NUCLEOTIDE SEQUENCE [MRNA]</scope>
    <source>
        <tissue>Pituitary</tissue>
    </source>
</reference>
<comment type="function">
    <text>Growth hormone plays an important role in growth control and is involved in the regulation of several anabolic processes. Implicated as an osmoregulatory substance important for seawater adaptation.</text>
</comment>
<comment type="subcellular location">
    <subcellularLocation>
        <location>Secreted</location>
    </subcellularLocation>
</comment>
<comment type="similarity">
    <text evidence="2">Belongs to the somatotropin/prolactin family.</text>
</comment>
<proteinExistence type="evidence at transcript level"/>
<accession>Q9IB11</accession>
<accession>O73850</accession>